<feature type="chain" id="PRO_1000165467" description="Small ribosomal subunit protein uS5">
    <location>
        <begin position="1"/>
        <end position="167"/>
    </location>
</feature>
<feature type="domain" description="S5 DRBM" evidence="1">
    <location>
        <begin position="12"/>
        <end position="75"/>
    </location>
</feature>
<proteinExistence type="inferred from homology"/>
<reference key="1">
    <citation type="journal article" date="2008" name="PLoS ONE">
        <title>A recalibrated molecular clock and independent origins for the cholera pandemic clones.</title>
        <authorList>
            <person name="Feng L."/>
            <person name="Reeves P.R."/>
            <person name="Lan R."/>
            <person name="Ren Y."/>
            <person name="Gao C."/>
            <person name="Zhou Z."/>
            <person name="Ren Y."/>
            <person name="Cheng J."/>
            <person name="Wang W."/>
            <person name="Wang J."/>
            <person name="Qian W."/>
            <person name="Li D."/>
            <person name="Wang L."/>
        </authorList>
    </citation>
    <scope>NUCLEOTIDE SEQUENCE [LARGE SCALE GENOMIC DNA]</scope>
    <source>
        <strain>M66-2</strain>
    </source>
</reference>
<gene>
    <name evidence="1" type="primary">rpsE</name>
    <name type="ordered locus">VCM66_2499</name>
</gene>
<evidence type="ECO:0000255" key="1">
    <source>
        <dbReference type="HAMAP-Rule" id="MF_01307"/>
    </source>
</evidence>
<evidence type="ECO:0000305" key="2"/>
<dbReference type="EMBL" id="CP001233">
    <property type="protein sequence ID" value="ACP06796.1"/>
    <property type="molecule type" value="Genomic_DNA"/>
</dbReference>
<dbReference type="RefSeq" id="WP_001040926.1">
    <property type="nucleotide sequence ID" value="NC_012578.1"/>
</dbReference>
<dbReference type="SMR" id="C3LRP1"/>
<dbReference type="GeneID" id="94012769"/>
<dbReference type="KEGG" id="vcm:VCM66_2499"/>
<dbReference type="HOGENOM" id="CLU_065898_2_2_6"/>
<dbReference type="Proteomes" id="UP000001217">
    <property type="component" value="Chromosome I"/>
</dbReference>
<dbReference type="GO" id="GO:0015935">
    <property type="term" value="C:small ribosomal subunit"/>
    <property type="evidence" value="ECO:0007669"/>
    <property type="project" value="InterPro"/>
</dbReference>
<dbReference type="GO" id="GO:0019843">
    <property type="term" value="F:rRNA binding"/>
    <property type="evidence" value="ECO:0007669"/>
    <property type="project" value="UniProtKB-UniRule"/>
</dbReference>
<dbReference type="GO" id="GO:0003735">
    <property type="term" value="F:structural constituent of ribosome"/>
    <property type="evidence" value="ECO:0007669"/>
    <property type="project" value="InterPro"/>
</dbReference>
<dbReference type="GO" id="GO:0006412">
    <property type="term" value="P:translation"/>
    <property type="evidence" value="ECO:0007669"/>
    <property type="project" value="UniProtKB-UniRule"/>
</dbReference>
<dbReference type="FunFam" id="3.30.160.20:FF:000001">
    <property type="entry name" value="30S ribosomal protein S5"/>
    <property type="match status" value="1"/>
</dbReference>
<dbReference type="FunFam" id="3.30.230.10:FF:000002">
    <property type="entry name" value="30S ribosomal protein S5"/>
    <property type="match status" value="1"/>
</dbReference>
<dbReference type="Gene3D" id="3.30.160.20">
    <property type="match status" value="1"/>
</dbReference>
<dbReference type="Gene3D" id="3.30.230.10">
    <property type="match status" value="1"/>
</dbReference>
<dbReference type="HAMAP" id="MF_01307_B">
    <property type="entry name" value="Ribosomal_uS5_B"/>
    <property type="match status" value="1"/>
</dbReference>
<dbReference type="InterPro" id="IPR020568">
    <property type="entry name" value="Ribosomal_Su5_D2-typ_SF"/>
</dbReference>
<dbReference type="InterPro" id="IPR000851">
    <property type="entry name" value="Ribosomal_uS5"/>
</dbReference>
<dbReference type="InterPro" id="IPR005712">
    <property type="entry name" value="Ribosomal_uS5_bac-type"/>
</dbReference>
<dbReference type="InterPro" id="IPR005324">
    <property type="entry name" value="Ribosomal_uS5_C"/>
</dbReference>
<dbReference type="InterPro" id="IPR013810">
    <property type="entry name" value="Ribosomal_uS5_N"/>
</dbReference>
<dbReference type="InterPro" id="IPR018192">
    <property type="entry name" value="Ribosomal_uS5_N_CS"/>
</dbReference>
<dbReference type="InterPro" id="IPR014721">
    <property type="entry name" value="Ribsml_uS5_D2-typ_fold_subgr"/>
</dbReference>
<dbReference type="NCBIfam" id="TIGR01021">
    <property type="entry name" value="rpsE_bact"/>
    <property type="match status" value="1"/>
</dbReference>
<dbReference type="PANTHER" id="PTHR48277">
    <property type="entry name" value="MITOCHONDRIAL RIBOSOMAL PROTEIN S5"/>
    <property type="match status" value="1"/>
</dbReference>
<dbReference type="PANTHER" id="PTHR48277:SF1">
    <property type="entry name" value="MITOCHONDRIAL RIBOSOMAL PROTEIN S5"/>
    <property type="match status" value="1"/>
</dbReference>
<dbReference type="Pfam" id="PF00333">
    <property type="entry name" value="Ribosomal_S5"/>
    <property type="match status" value="1"/>
</dbReference>
<dbReference type="Pfam" id="PF03719">
    <property type="entry name" value="Ribosomal_S5_C"/>
    <property type="match status" value="1"/>
</dbReference>
<dbReference type="SUPFAM" id="SSF54768">
    <property type="entry name" value="dsRNA-binding domain-like"/>
    <property type="match status" value="1"/>
</dbReference>
<dbReference type="SUPFAM" id="SSF54211">
    <property type="entry name" value="Ribosomal protein S5 domain 2-like"/>
    <property type="match status" value="1"/>
</dbReference>
<dbReference type="PROSITE" id="PS00585">
    <property type="entry name" value="RIBOSOMAL_S5"/>
    <property type="match status" value="1"/>
</dbReference>
<dbReference type="PROSITE" id="PS50881">
    <property type="entry name" value="S5_DSRBD"/>
    <property type="match status" value="1"/>
</dbReference>
<keyword id="KW-0687">Ribonucleoprotein</keyword>
<keyword id="KW-0689">Ribosomal protein</keyword>
<keyword id="KW-0694">RNA-binding</keyword>
<keyword id="KW-0699">rRNA-binding</keyword>
<protein>
    <recommendedName>
        <fullName evidence="1">Small ribosomal subunit protein uS5</fullName>
    </recommendedName>
    <alternativeName>
        <fullName evidence="2">30S ribosomal protein S5</fullName>
    </alternativeName>
</protein>
<comment type="function">
    <text evidence="1">With S4 and S12 plays an important role in translational accuracy.</text>
</comment>
<comment type="function">
    <text evidence="1">Located at the back of the 30S subunit body where it stabilizes the conformation of the head with respect to the body.</text>
</comment>
<comment type="subunit">
    <text evidence="1">Part of the 30S ribosomal subunit. Contacts proteins S4 and S8.</text>
</comment>
<comment type="domain">
    <text>The N-terminal domain interacts with the head of the 30S subunit; the C-terminal domain interacts with the body and contacts protein S4. The interaction surface between S4 and S5 is involved in control of translational fidelity.</text>
</comment>
<comment type="similarity">
    <text evidence="1">Belongs to the universal ribosomal protein uS5 family.</text>
</comment>
<sequence>MAKEQQVQANDLQEKLIAVNRVSKTVKGGRIMSFTALTVVGDGNGRVGFGYGKAREVPAAIQKAMEKARRSMVTIALNEGTLHHPVKGRHSGSKVYMQPAAEGTGVIAGGAMRAVLEVAGVHNVLSKAYGSTNPINIVRATIDALVDVKSPEMVAAKRGLTVEAISE</sequence>
<accession>C3LRP1</accession>
<name>RS5_VIBCM</name>
<organism>
    <name type="scientific">Vibrio cholerae serotype O1 (strain M66-2)</name>
    <dbReference type="NCBI Taxonomy" id="579112"/>
    <lineage>
        <taxon>Bacteria</taxon>
        <taxon>Pseudomonadati</taxon>
        <taxon>Pseudomonadota</taxon>
        <taxon>Gammaproteobacteria</taxon>
        <taxon>Vibrionales</taxon>
        <taxon>Vibrionaceae</taxon>
        <taxon>Vibrio</taxon>
    </lineage>
</organism>